<dbReference type="EMBL" id="L42023">
    <property type="protein sequence ID" value="AAC22396.1"/>
    <property type="molecule type" value="Genomic_DNA"/>
</dbReference>
<dbReference type="PIR" id="F64089">
    <property type="entry name" value="F64089"/>
</dbReference>
<dbReference type="RefSeq" id="NP_438896.1">
    <property type="nucleotide sequence ID" value="NC_000907.1"/>
</dbReference>
<dbReference type="SMR" id="O05031"/>
<dbReference type="STRING" id="71421.HI_0737"/>
<dbReference type="EnsemblBacteria" id="AAC22396">
    <property type="protein sequence ID" value="AAC22396"/>
    <property type="gene ID" value="HI_0737"/>
</dbReference>
<dbReference type="KEGG" id="hin:HI_0737"/>
<dbReference type="PATRIC" id="fig|71421.8.peg.773"/>
<dbReference type="eggNOG" id="COG0028">
    <property type="taxonomic scope" value="Bacteria"/>
</dbReference>
<dbReference type="HOGENOM" id="CLU_091591_0_0_6"/>
<dbReference type="OrthoDB" id="9785953at2"/>
<dbReference type="PhylomeDB" id="O05031"/>
<dbReference type="BioCyc" id="HINF71421:G1GJ1-775-MONOMER"/>
<dbReference type="Proteomes" id="UP000000579">
    <property type="component" value="Chromosome"/>
</dbReference>
<dbReference type="GO" id="GO:0016829">
    <property type="term" value="F:lyase activity"/>
    <property type="evidence" value="ECO:0007669"/>
    <property type="project" value="UniProtKB-KW"/>
</dbReference>
<dbReference type="GO" id="GO:0030976">
    <property type="term" value="F:thiamine pyrophosphate binding"/>
    <property type="evidence" value="ECO:0007669"/>
    <property type="project" value="InterPro"/>
</dbReference>
<dbReference type="CDD" id="cd07035">
    <property type="entry name" value="TPP_PYR_POX_like"/>
    <property type="match status" value="1"/>
</dbReference>
<dbReference type="FunFam" id="3.40.50.970:FF:000007">
    <property type="entry name" value="Acetolactate synthase"/>
    <property type="match status" value="1"/>
</dbReference>
<dbReference type="Gene3D" id="3.40.50.970">
    <property type="match status" value="2"/>
</dbReference>
<dbReference type="InterPro" id="IPR029061">
    <property type="entry name" value="THDP-binding"/>
</dbReference>
<dbReference type="InterPro" id="IPR012001">
    <property type="entry name" value="Thiamin_PyroP_enz_TPP-bd_dom"/>
</dbReference>
<dbReference type="InterPro" id="IPR045229">
    <property type="entry name" value="TPP_enz"/>
</dbReference>
<dbReference type="PANTHER" id="PTHR18968:SF142">
    <property type="entry name" value="ACETOLACTATE SYNTHASE"/>
    <property type="match status" value="1"/>
</dbReference>
<dbReference type="PANTHER" id="PTHR18968">
    <property type="entry name" value="THIAMINE PYROPHOSPHATE ENZYMES"/>
    <property type="match status" value="1"/>
</dbReference>
<dbReference type="Pfam" id="PF13710">
    <property type="entry name" value="ACT_5"/>
    <property type="match status" value="1"/>
</dbReference>
<dbReference type="Pfam" id="PF02776">
    <property type="entry name" value="TPP_enzyme_N"/>
    <property type="match status" value="1"/>
</dbReference>
<dbReference type="SUPFAM" id="SSF52518">
    <property type="entry name" value="Thiamin diphosphate-binding fold (THDP-binding)"/>
    <property type="match status" value="2"/>
</dbReference>
<evidence type="ECO:0000250" key="1"/>
<evidence type="ECO:0000305" key="2"/>
<gene>
    <name type="ordered locus">HI_0737</name>
</gene>
<keyword id="KW-0456">Lyase</keyword>
<keyword id="KW-1185">Reference proteome</keyword>
<keyword id="KW-0786">Thiamine pyrophosphate</keyword>
<sequence length="265" mass="28784">MTGAQLIMACLKAHHVTTLFGYPGGAIMPTYDALYDAGLDHLLCRNEQGTAMAAIGYARSTGKVGVCIATSGPGATNLVIGLGDAMMDSIPVVTITGQVASPLIGTDAFQEADVLGLSLACTKHSFIVQSADVALQGDLIQALNALKQDLDIEPWREQIRNFKAKLDFTYVENQGNRPIDPWALLNSLSNRKPNNAIICTDVGQHQMWLVQHILRVARHCGFTVTTMEMTLIETQVRLKITVKSDRTLDLLVNQLVKLPDVLMVN</sequence>
<comment type="function">
    <text>Truncated acetolactase synthase; no longer catalytically active.</text>
</comment>
<comment type="cofactor">
    <cofactor evidence="1">
        <name>Mg(2+)</name>
        <dbReference type="ChEBI" id="CHEBI:18420"/>
    </cofactor>
    <text evidence="1">Binds 1 Mg(2+) ion per subunit.</text>
</comment>
<comment type="cofactor">
    <cofactor evidence="1">
        <name>thiamine diphosphate</name>
        <dbReference type="ChEBI" id="CHEBI:58937"/>
    </cofactor>
    <text evidence="1">Binds 1 thiamine pyrophosphate per subunit.</text>
</comment>
<comment type="similarity">
    <text evidence="2">Belongs to the TPP enzyme family.</text>
</comment>
<comment type="caution">
    <text evidence="2">Could be the product of a pseudogene.</text>
</comment>
<feature type="chain" id="PRO_0000090814" description="Putative uncharacterized protein HI_0737">
    <location>
        <begin position="1"/>
        <end position="265"/>
    </location>
</feature>
<feature type="region of interest" description="Thiamine pyrophosphate binding">
    <location>
        <begin position="204"/>
        <end position="247"/>
    </location>
</feature>
<feature type="binding site" evidence="1">
    <location>
        <position position="47"/>
    </location>
    <ligand>
        <name>thiamine diphosphate</name>
        <dbReference type="ChEBI" id="CHEBI:58937"/>
    </ligand>
</feature>
<proteinExistence type="uncertain"/>
<protein>
    <recommendedName>
        <fullName>Putative uncharacterized protein HI_0737</fullName>
    </recommendedName>
</protein>
<accession>O05031</accession>
<name>Y737_HAEIN</name>
<reference key="1">
    <citation type="journal article" date="1995" name="Science">
        <title>Whole-genome random sequencing and assembly of Haemophilus influenzae Rd.</title>
        <authorList>
            <person name="Fleischmann R.D."/>
            <person name="Adams M.D."/>
            <person name="White O."/>
            <person name="Clayton R.A."/>
            <person name="Kirkness E.F."/>
            <person name="Kerlavage A.R."/>
            <person name="Bult C.J."/>
            <person name="Tomb J.-F."/>
            <person name="Dougherty B.A."/>
            <person name="Merrick J.M."/>
            <person name="McKenney K."/>
            <person name="Sutton G.G."/>
            <person name="FitzHugh W."/>
            <person name="Fields C.A."/>
            <person name="Gocayne J.D."/>
            <person name="Scott J.D."/>
            <person name="Shirley R."/>
            <person name="Liu L.-I."/>
            <person name="Glodek A."/>
            <person name="Kelley J.M."/>
            <person name="Weidman J.F."/>
            <person name="Phillips C.A."/>
            <person name="Spriggs T."/>
            <person name="Hedblom E."/>
            <person name="Cotton M.D."/>
            <person name="Utterback T.R."/>
            <person name="Hanna M.C."/>
            <person name="Nguyen D.T."/>
            <person name="Saudek D.M."/>
            <person name="Brandon R.C."/>
            <person name="Fine L.D."/>
            <person name="Fritchman J.L."/>
            <person name="Fuhrmann J.L."/>
            <person name="Geoghagen N.S.M."/>
            <person name="Gnehm C.L."/>
            <person name="McDonald L.A."/>
            <person name="Small K.V."/>
            <person name="Fraser C.M."/>
            <person name="Smith H.O."/>
            <person name="Venter J.C."/>
        </authorList>
    </citation>
    <scope>NUCLEOTIDE SEQUENCE [LARGE SCALE GENOMIC DNA]</scope>
    <source>
        <strain>ATCC 51907 / DSM 11121 / KW20 / Rd</strain>
    </source>
</reference>
<organism>
    <name type="scientific">Haemophilus influenzae (strain ATCC 51907 / DSM 11121 / KW20 / Rd)</name>
    <dbReference type="NCBI Taxonomy" id="71421"/>
    <lineage>
        <taxon>Bacteria</taxon>
        <taxon>Pseudomonadati</taxon>
        <taxon>Pseudomonadota</taxon>
        <taxon>Gammaproteobacteria</taxon>
        <taxon>Pasteurellales</taxon>
        <taxon>Pasteurellaceae</taxon>
        <taxon>Haemophilus</taxon>
    </lineage>
</organism>